<proteinExistence type="inferred from homology"/>
<organism>
    <name type="scientific">Yersinia pseudotuberculosis serotype I (strain IP32953)</name>
    <dbReference type="NCBI Taxonomy" id="273123"/>
    <lineage>
        <taxon>Bacteria</taxon>
        <taxon>Pseudomonadati</taxon>
        <taxon>Pseudomonadota</taxon>
        <taxon>Gammaproteobacteria</taxon>
        <taxon>Enterobacterales</taxon>
        <taxon>Yersiniaceae</taxon>
        <taxon>Yersinia</taxon>
    </lineage>
</organism>
<sequence length="200" mass="22471">MAKFIQHIGLVAPLDAANVDTDAIIPKQFLQKVTRTGFGQHLFNDWRFLDDAGKVPNPDFVLNLPRYQGATILLARENFGCGSSREHAPWALTDFGFKVVIAPSFADIFYGNAFNNQLLPVTLSEADIDTLFQLVKENEGIEFVVDLEQQTVNAGGKSYAFEIDPFRRHCMINGLDSIGLTLQHEHNISAYEKQQPEFLR</sequence>
<keyword id="KW-0028">Amino-acid biosynthesis</keyword>
<keyword id="KW-0100">Branched-chain amino acid biosynthesis</keyword>
<keyword id="KW-0432">Leucine biosynthesis</keyword>
<keyword id="KW-0456">Lyase</keyword>
<name>LEUD_YERPS</name>
<comment type="function">
    <text evidence="1">Catalyzes the isomerization between 2-isopropylmalate and 3-isopropylmalate, via the formation of 2-isopropylmaleate.</text>
</comment>
<comment type="catalytic activity">
    <reaction evidence="1">
        <text>(2R,3S)-3-isopropylmalate = (2S)-2-isopropylmalate</text>
        <dbReference type="Rhea" id="RHEA:32287"/>
        <dbReference type="ChEBI" id="CHEBI:1178"/>
        <dbReference type="ChEBI" id="CHEBI:35121"/>
        <dbReference type="EC" id="4.2.1.33"/>
    </reaction>
</comment>
<comment type="pathway">
    <text evidence="1">Amino-acid biosynthesis; L-leucine biosynthesis; L-leucine from 3-methyl-2-oxobutanoate: step 2/4.</text>
</comment>
<comment type="subunit">
    <text evidence="1">Heterodimer of LeuC and LeuD.</text>
</comment>
<comment type="similarity">
    <text evidence="1">Belongs to the LeuD family. LeuD type 1 subfamily.</text>
</comment>
<gene>
    <name evidence="1" type="primary">leuD</name>
    <name type="ordered locus">YPTB0669</name>
</gene>
<reference key="1">
    <citation type="journal article" date="2004" name="Proc. Natl. Acad. Sci. U.S.A.">
        <title>Insights into the evolution of Yersinia pestis through whole-genome comparison with Yersinia pseudotuberculosis.</title>
        <authorList>
            <person name="Chain P.S.G."/>
            <person name="Carniel E."/>
            <person name="Larimer F.W."/>
            <person name="Lamerdin J."/>
            <person name="Stoutland P.O."/>
            <person name="Regala W.M."/>
            <person name="Georgescu A.M."/>
            <person name="Vergez L.M."/>
            <person name="Land M.L."/>
            <person name="Motin V.L."/>
            <person name="Brubaker R.R."/>
            <person name="Fowler J."/>
            <person name="Hinnebusch J."/>
            <person name="Marceau M."/>
            <person name="Medigue C."/>
            <person name="Simonet M."/>
            <person name="Chenal-Francisque V."/>
            <person name="Souza B."/>
            <person name="Dacheux D."/>
            <person name="Elliott J.M."/>
            <person name="Derbise A."/>
            <person name="Hauser L.J."/>
            <person name="Garcia E."/>
        </authorList>
    </citation>
    <scope>NUCLEOTIDE SEQUENCE [LARGE SCALE GENOMIC DNA]</scope>
    <source>
        <strain>IP32953</strain>
    </source>
</reference>
<feature type="chain" id="PRO_0000141918" description="3-isopropylmalate dehydratase small subunit">
    <location>
        <begin position="1"/>
        <end position="200"/>
    </location>
</feature>
<dbReference type="EC" id="4.2.1.33" evidence="1"/>
<dbReference type="EMBL" id="BX936398">
    <property type="protein sequence ID" value="CAH19909.1"/>
    <property type="molecule type" value="Genomic_DNA"/>
</dbReference>
<dbReference type="RefSeq" id="WP_002210456.1">
    <property type="nucleotide sequence ID" value="NZ_CP009712.1"/>
</dbReference>
<dbReference type="SMR" id="Q66EM4"/>
<dbReference type="GeneID" id="57974082"/>
<dbReference type="KEGG" id="ypo:BZ17_1888"/>
<dbReference type="KEGG" id="yps:YPTB0669"/>
<dbReference type="PATRIC" id="fig|273123.14.peg.2004"/>
<dbReference type="UniPathway" id="UPA00048">
    <property type="reaction ID" value="UER00071"/>
</dbReference>
<dbReference type="Proteomes" id="UP000001011">
    <property type="component" value="Chromosome"/>
</dbReference>
<dbReference type="GO" id="GO:0009316">
    <property type="term" value="C:3-isopropylmalate dehydratase complex"/>
    <property type="evidence" value="ECO:0007669"/>
    <property type="project" value="InterPro"/>
</dbReference>
<dbReference type="GO" id="GO:0003861">
    <property type="term" value="F:3-isopropylmalate dehydratase activity"/>
    <property type="evidence" value="ECO:0007669"/>
    <property type="project" value="UniProtKB-UniRule"/>
</dbReference>
<dbReference type="GO" id="GO:0009098">
    <property type="term" value="P:L-leucine biosynthetic process"/>
    <property type="evidence" value="ECO:0007669"/>
    <property type="project" value="UniProtKB-UniRule"/>
</dbReference>
<dbReference type="CDD" id="cd01577">
    <property type="entry name" value="IPMI_Swivel"/>
    <property type="match status" value="1"/>
</dbReference>
<dbReference type="FunFam" id="3.20.19.10:FF:000003">
    <property type="entry name" value="3-isopropylmalate dehydratase small subunit"/>
    <property type="match status" value="1"/>
</dbReference>
<dbReference type="Gene3D" id="3.20.19.10">
    <property type="entry name" value="Aconitase, domain 4"/>
    <property type="match status" value="1"/>
</dbReference>
<dbReference type="HAMAP" id="MF_01031">
    <property type="entry name" value="LeuD_type1"/>
    <property type="match status" value="1"/>
</dbReference>
<dbReference type="InterPro" id="IPR004431">
    <property type="entry name" value="3-IsopropMal_deHydase_ssu"/>
</dbReference>
<dbReference type="InterPro" id="IPR015928">
    <property type="entry name" value="Aconitase/3IPM_dehydase_swvl"/>
</dbReference>
<dbReference type="InterPro" id="IPR000573">
    <property type="entry name" value="AconitaseA/IPMdHydase_ssu_swvl"/>
</dbReference>
<dbReference type="InterPro" id="IPR033940">
    <property type="entry name" value="IPMI_Swivel"/>
</dbReference>
<dbReference type="InterPro" id="IPR050075">
    <property type="entry name" value="LeuD"/>
</dbReference>
<dbReference type="NCBIfam" id="TIGR00171">
    <property type="entry name" value="leuD"/>
    <property type="match status" value="1"/>
</dbReference>
<dbReference type="NCBIfam" id="NF002458">
    <property type="entry name" value="PRK01641.1"/>
    <property type="match status" value="1"/>
</dbReference>
<dbReference type="PANTHER" id="PTHR43345:SF5">
    <property type="entry name" value="3-ISOPROPYLMALATE DEHYDRATASE SMALL SUBUNIT"/>
    <property type="match status" value="1"/>
</dbReference>
<dbReference type="PANTHER" id="PTHR43345">
    <property type="entry name" value="3-ISOPROPYLMALATE DEHYDRATASE SMALL SUBUNIT 2-RELATED-RELATED"/>
    <property type="match status" value="1"/>
</dbReference>
<dbReference type="Pfam" id="PF00694">
    <property type="entry name" value="Aconitase_C"/>
    <property type="match status" value="1"/>
</dbReference>
<dbReference type="SUPFAM" id="SSF52016">
    <property type="entry name" value="LeuD/IlvD-like"/>
    <property type="match status" value="1"/>
</dbReference>
<accession>Q66EM4</accession>
<protein>
    <recommendedName>
        <fullName evidence="1">3-isopropylmalate dehydratase small subunit</fullName>
        <ecNumber evidence="1">4.2.1.33</ecNumber>
    </recommendedName>
    <alternativeName>
        <fullName evidence="1">Alpha-IPM isomerase</fullName>
        <shortName evidence="1">IPMI</shortName>
    </alternativeName>
    <alternativeName>
        <fullName evidence="1">Isopropylmalate isomerase</fullName>
    </alternativeName>
</protein>
<evidence type="ECO:0000255" key="1">
    <source>
        <dbReference type="HAMAP-Rule" id="MF_01031"/>
    </source>
</evidence>